<gene>
    <name type="primary">ngoMIVR</name>
</gene>
<protein>
    <recommendedName>
        <fullName evidence="2">Type II restriction enzyme NgoMIV</fullName>
        <shortName evidence="2">R.NgoMIV</shortName>
        <ecNumber>3.1.21.4</ecNumber>
    </recommendedName>
    <alternativeName>
        <fullName>Endonuclease NgoMIV</fullName>
    </alternativeName>
    <alternativeName>
        <fullName evidence="3">Restriction enzyme NgoMI</fullName>
        <shortName evidence="3">NgoMI</shortName>
    </alternativeName>
    <alternativeName>
        <fullName>Type-2 restriction enzyme NgoMIV</fullName>
    </alternativeName>
</protein>
<keyword id="KW-0002">3D-structure</keyword>
<keyword id="KW-0255">Endonuclease</keyword>
<keyword id="KW-0378">Hydrolase</keyword>
<keyword id="KW-0460">Magnesium</keyword>
<keyword id="KW-0479">Metal-binding</keyword>
<keyword id="KW-0540">Nuclease</keyword>
<keyword id="KW-0680">Restriction system</keyword>
<sequence>MNPLFTQERRIFHKKLLDGNILATNNRGVVSNADGSNTRSFNIAKGIADLLHSETVSERLPGQTSGNAFEAICSEFVQSAFEKLQHIRPGDWNVKQVGSRNRLEIARYQQYAHLTALAKAAEENPELAAALGSDYTITPDIIVTRNLIADAEINRNEFLVDENIATYASLRAGNGNMPLLHASISCKWTIRSDRAQNARSEGLNLVRNRKGRLPHIVVVTAEPTPSRISSIALGTGEIDCVYHFALYELEQILQSLNYEDALDLFYIMVNGKRLKDISDLPLDLAV</sequence>
<organism>
    <name type="scientific">Neisseria gonorrhoeae</name>
    <dbReference type="NCBI Taxonomy" id="485"/>
    <lineage>
        <taxon>Bacteria</taxon>
        <taxon>Pseudomonadati</taxon>
        <taxon>Pseudomonadota</taxon>
        <taxon>Betaproteobacteria</taxon>
        <taxon>Neisseriales</taxon>
        <taxon>Neisseriaceae</taxon>
        <taxon>Neisseria</taxon>
    </lineage>
</organism>
<evidence type="ECO:0000269" key="1">
    <source>
    </source>
</evidence>
<evidence type="ECO:0000303" key="2">
    <source>
    </source>
</evidence>
<evidence type="ECO:0000303" key="3">
    <source>
    </source>
</evidence>
<evidence type="ECO:0000305" key="4">
    <source>
    </source>
</evidence>
<evidence type="ECO:0007829" key="5">
    <source>
        <dbReference type="PDB" id="1FIU"/>
    </source>
</evidence>
<evidence type="ECO:0007829" key="6">
    <source>
        <dbReference type="PDB" id="4ABT"/>
    </source>
</evidence>
<reference key="1">
    <citation type="journal article" date="1992" name="J. Bacteriol.">
        <title>Construction of a Neisseria gonorrhoeae MS11 derivative deficient in NgoMI restriction and modification.</title>
        <authorList>
            <person name="Stein D.C."/>
            <person name="Chien R."/>
            <person name="Seifert H.S."/>
        </authorList>
    </citation>
    <scope>NUCLEOTIDE SEQUENCE [GENOMIC DNA]</scope>
    <scope>FUNCTION</scope>
    <source>
        <strain>MS11</strain>
    </source>
</reference>
<reference key="2">
    <citation type="journal article" date="2003" name="Nucleic Acids Res.">
        <title>A nomenclature for restriction enzymes, DNA methyltransferases, homing endonucleases and their genes.</title>
        <authorList>
            <person name="Roberts R.J."/>
            <person name="Belfort M."/>
            <person name="Bestor T."/>
            <person name="Bhagwat A.S."/>
            <person name="Bickle T.A."/>
            <person name="Bitinaite J."/>
            <person name="Blumenthal R.M."/>
            <person name="Degtyarev S.K."/>
            <person name="Dryden D.T."/>
            <person name="Dybvig K."/>
            <person name="Firman K."/>
            <person name="Gromova E.S."/>
            <person name="Gumport R.I."/>
            <person name="Halford S.E."/>
            <person name="Hattman S."/>
            <person name="Heitman J."/>
            <person name="Hornby D.P."/>
            <person name="Janulaitis A."/>
            <person name="Jeltsch A."/>
            <person name="Josephsen J."/>
            <person name="Kiss A."/>
            <person name="Klaenhammer T.R."/>
            <person name="Kobayashi I."/>
            <person name="Kong H."/>
            <person name="Krueger D.H."/>
            <person name="Lacks S."/>
            <person name="Marinus M.G."/>
            <person name="Miyahara M."/>
            <person name="Morgan R.D."/>
            <person name="Murray N.E."/>
            <person name="Nagaraja V."/>
            <person name="Piekarowicz A."/>
            <person name="Pingoud A."/>
            <person name="Raleigh E."/>
            <person name="Rao D.N."/>
            <person name="Reich N."/>
            <person name="Repin V.E."/>
            <person name="Selker E.U."/>
            <person name="Shaw P.C."/>
            <person name="Stein D.C."/>
            <person name="Stoddard B.L."/>
            <person name="Szybalski W."/>
            <person name="Trautner T.A."/>
            <person name="Van Etten J.L."/>
            <person name="Vitor J.M."/>
            <person name="Wilson G.G."/>
            <person name="Xu S.Y."/>
        </authorList>
    </citation>
    <scope>NOMENCLATURE</scope>
    <scope>SUBTYPE</scope>
</reference>
<reference key="3">
    <citation type="journal article" date="2000" name="Nat. Struct. Biol.">
        <title>Structure of the tetrameric restriction endonuclease NgoMIV in complex with cleaved DNA.</title>
        <authorList>
            <person name="Deibert M."/>
            <person name="Grazulis S."/>
            <person name="Sasnauskas G."/>
            <person name="Siksnys V."/>
            <person name="Huber R."/>
        </authorList>
    </citation>
    <scope>X-RAY CRYSTALLOGRAPHY (1.6 ANGSTROMS)</scope>
    <scope>SUBUNIT</scope>
</reference>
<name>T2M4_NEIGO</name>
<comment type="function">
    <text evidence="2 4">A P subtype restriction enzyme that recognizes the double-stranded sequence 5'-GCCGGC-3' and cleaves after G-1.</text>
</comment>
<comment type="catalytic activity">
    <reaction>
        <text>Endonucleolytic cleavage of DNA to give specific double-stranded fragments with terminal 5'-phosphates.</text>
        <dbReference type="EC" id="3.1.21.4"/>
    </reaction>
</comment>
<comment type="cofactor">
    <cofactor>
        <name>Mg(2+)</name>
        <dbReference type="ChEBI" id="CHEBI:18420"/>
    </cofactor>
    <text>Binds 2 magnesium ions per subunit.</text>
</comment>
<comment type="subunit">
    <text evidence="1">Homotetramer.</text>
</comment>
<comment type="caution">
    <text evidence="4">Was originally known as R.NgoMI.</text>
</comment>
<proteinExistence type="evidence at protein level"/>
<accession>P31032</accession>
<dbReference type="EC" id="3.1.21.4"/>
<dbReference type="EMBL" id="M86915">
    <property type="status" value="NOT_ANNOTATED_CDS"/>
    <property type="molecule type" value="Genomic_DNA"/>
</dbReference>
<dbReference type="PIR" id="B42709">
    <property type="entry name" value="B42709"/>
</dbReference>
<dbReference type="RefSeq" id="WP_003688519.1">
    <property type="nucleotide sequence ID" value="NZ_WHPL01000002.1"/>
</dbReference>
<dbReference type="PDB" id="1FIU">
    <property type="method" value="X-ray"/>
    <property type="resolution" value="1.60 A"/>
    <property type="chains" value="A/B/C/D=1-286"/>
</dbReference>
<dbReference type="PDB" id="4ABT">
    <property type="method" value="X-ray"/>
    <property type="resolution" value="2.22 A"/>
    <property type="chains" value="A/B=3-286"/>
</dbReference>
<dbReference type="PDBsum" id="1FIU"/>
<dbReference type="PDBsum" id="4ABT"/>
<dbReference type="SMR" id="P31032"/>
<dbReference type="EvolutionaryTrace" id="P31032"/>
<dbReference type="PRO" id="PR:P31032"/>
<dbReference type="GO" id="GO:0046872">
    <property type="term" value="F:metal ion binding"/>
    <property type="evidence" value="ECO:0007669"/>
    <property type="project" value="UniProtKB-KW"/>
</dbReference>
<dbReference type="GO" id="GO:0009036">
    <property type="term" value="F:type II site-specific deoxyribonuclease activity"/>
    <property type="evidence" value="ECO:0007669"/>
    <property type="project" value="UniProtKB-EC"/>
</dbReference>
<dbReference type="GO" id="GO:0009307">
    <property type="term" value="P:DNA restriction-modification system"/>
    <property type="evidence" value="ECO:0007669"/>
    <property type="project" value="UniProtKB-KW"/>
</dbReference>
<dbReference type="CDD" id="cd22340">
    <property type="entry name" value="NgoMIV-like"/>
    <property type="match status" value="1"/>
</dbReference>
<dbReference type="Gene3D" id="3.40.50.10010">
    <property type="entry name" value="Type-2 restriction enzyme NgoMIV"/>
    <property type="match status" value="1"/>
</dbReference>
<dbReference type="InterPro" id="IPR015105">
    <property type="entry name" value="NgoMIV"/>
</dbReference>
<dbReference type="InterPro" id="IPR037083">
    <property type="entry name" value="NgoMIV_sf"/>
</dbReference>
<dbReference type="InterPro" id="IPR011335">
    <property type="entry name" value="Restrct_endonuc-II-like"/>
</dbReference>
<dbReference type="Pfam" id="PF09015">
    <property type="entry name" value="NgoMIV_restric"/>
    <property type="match status" value="1"/>
</dbReference>
<dbReference type="SUPFAM" id="SSF52980">
    <property type="entry name" value="Restriction endonuclease-like"/>
    <property type="match status" value="1"/>
</dbReference>
<feature type="chain" id="PRO_0000077347" description="Type II restriction enzyme NgoMIV">
    <location>
        <begin position="1"/>
        <end position="286"/>
    </location>
</feature>
<feature type="binding site">
    <location>
        <position position="140"/>
    </location>
    <ligand>
        <name>Mg(2+)</name>
        <dbReference type="ChEBI" id="CHEBI:18420"/>
        <label>1</label>
    </ligand>
</feature>
<feature type="binding site">
    <location>
        <position position="140"/>
    </location>
    <ligand>
        <name>Mg(2+)</name>
        <dbReference type="ChEBI" id="CHEBI:18420"/>
        <label>2</label>
    </ligand>
</feature>
<feature type="binding site">
    <location>
        <position position="186"/>
    </location>
    <ligand>
        <name>Mg(2+)</name>
        <dbReference type="ChEBI" id="CHEBI:18420"/>
        <label>1</label>
    </ligand>
</feature>
<feature type="helix" evidence="5">
    <location>
        <begin position="4"/>
        <end position="18"/>
    </location>
</feature>
<feature type="helix" evidence="5">
    <location>
        <begin position="38"/>
        <end position="50"/>
    </location>
</feature>
<feature type="helix" evidence="5">
    <location>
        <begin position="62"/>
        <end position="81"/>
    </location>
</feature>
<feature type="helix" evidence="5">
    <location>
        <begin position="82"/>
        <end position="84"/>
    </location>
</feature>
<feature type="turn" evidence="5">
    <location>
        <begin position="85"/>
        <end position="87"/>
    </location>
</feature>
<feature type="strand" evidence="5">
    <location>
        <begin position="92"/>
        <end position="96"/>
    </location>
</feature>
<feature type="strand" evidence="6">
    <location>
        <begin position="99"/>
        <end position="101"/>
    </location>
</feature>
<feature type="helix" evidence="5">
    <location>
        <begin position="104"/>
        <end position="107"/>
    </location>
</feature>
<feature type="helix" evidence="5">
    <location>
        <begin position="109"/>
        <end position="112"/>
    </location>
</feature>
<feature type="helix" evidence="5">
    <location>
        <begin position="113"/>
        <end position="121"/>
    </location>
</feature>
<feature type="helix" evidence="5">
    <location>
        <begin position="125"/>
        <end position="131"/>
    </location>
</feature>
<feature type="strand" evidence="5">
    <location>
        <begin position="140"/>
        <end position="145"/>
    </location>
</feature>
<feature type="helix" evidence="5">
    <location>
        <begin position="150"/>
        <end position="153"/>
    </location>
</feature>
<feature type="strand" evidence="5">
    <location>
        <begin position="155"/>
        <end position="157"/>
    </location>
</feature>
<feature type="strand" evidence="5">
    <location>
        <begin position="179"/>
        <end position="189"/>
    </location>
</feature>
<feature type="helix" evidence="5">
    <location>
        <begin position="194"/>
        <end position="196"/>
    </location>
</feature>
<feature type="helix" evidence="5">
    <location>
        <begin position="197"/>
        <end position="208"/>
    </location>
</feature>
<feature type="strand" evidence="5">
    <location>
        <begin position="210"/>
        <end position="212"/>
    </location>
</feature>
<feature type="strand" evidence="5">
    <location>
        <begin position="215"/>
        <end position="220"/>
    </location>
</feature>
<feature type="helix" evidence="5">
    <location>
        <begin position="225"/>
        <end position="232"/>
    </location>
</feature>
<feature type="strand" evidence="5">
    <location>
        <begin position="233"/>
        <end position="237"/>
    </location>
</feature>
<feature type="strand" evidence="5">
    <location>
        <begin position="239"/>
        <end position="243"/>
    </location>
</feature>
<feature type="helix" evidence="5">
    <location>
        <begin position="246"/>
        <end position="256"/>
    </location>
</feature>
<feature type="helix" evidence="5">
    <location>
        <begin position="259"/>
        <end position="270"/>
    </location>
</feature>
<feature type="strand" evidence="5">
    <location>
        <begin position="273"/>
        <end position="276"/>
    </location>
</feature>
<feature type="helix" evidence="5">
    <location>
        <begin position="277"/>
        <end position="279"/>
    </location>
</feature>
<feature type="helix" evidence="5">
    <location>
        <begin position="280"/>
        <end position="283"/>
    </location>
</feature>